<dbReference type="EMBL" id="AE008923">
    <property type="protein sequence ID" value="AAM36391.1"/>
    <property type="molecule type" value="Genomic_DNA"/>
</dbReference>
<dbReference type="RefSeq" id="WP_003483635.1">
    <property type="nucleotide sequence ID" value="NC_003919.1"/>
</dbReference>
<dbReference type="SMR" id="Q8PMB0"/>
<dbReference type="GeneID" id="66910680"/>
<dbReference type="KEGG" id="xac:XAC1522"/>
<dbReference type="eggNOG" id="COG0443">
    <property type="taxonomic scope" value="Bacteria"/>
</dbReference>
<dbReference type="HOGENOM" id="CLU_005965_2_1_6"/>
<dbReference type="Proteomes" id="UP000000576">
    <property type="component" value="Chromosome"/>
</dbReference>
<dbReference type="GO" id="GO:0005524">
    <property type="term" value="F:ATP binding"/>
    <property type="evidence" value="ECO:0007669"/>
    <property type="project" value="UniProtKB-UniRule"/>
</dbReference>
<dbReference type="GO" id="GO:0140662">
    <property type="term" value="F:ATP-dependent protein folding chaperone"/>
    <property type="evidence" value="ECO:0007669"/>
    <property type="project" value="InterPro"/>
</dbReference>
<dbReference type="GO" id="GO:0051082">
    <property type="term" value="F:unfolded protein binding"/>
    <property type="evidence" value="ECO:0007669"/>
    <property type="project" value="InterPro"/>
</dbReference>
<dbReference type="CDD" id="cd10234">
    <property type="entry name" value="ASKHA_NBD_HSP70_DnaK-like"/>
    <property type="match status" value="1"/>
</dbReference>
<dbReference type="FunFam" id="2.60.34.10:FF:000014">
    <property type="entry name" value="Chaperone protein DnaK HSP70"/>
    <property type="match status" value="1"/>
</dbReference>
<dbReference type="FunFam" id="3.30.30.30:FF:000003">
    <property type="entry name" value="Heat shock protein 9"/>
    <property type="match status" value="1"/>
</dbReference>
<dbReference type="FunFam" id="1.20.1270.10:FF:000001">
    <property type="entry name" value="Molecular chaperone DnaK"/>
    <property type="match status" value="1"/>
</dbReference>
<dbReference type="FunFam" id="3.30.420.40:FF:000004">
    <property type="entry name" value="Molecular chaperone DnaK"/>
    <property type="match status" value="1"/>
</dbReference>
<dbReference type="FunFam" id="3.90.640.10:FF:000003">
    <property type="entry name" value="Molecular chaperone DnaK"/>
    <property type="match status" value="1"/>
</dbReference>
<dbReference type="Gene3D" id="1.20.1270.10">
    <property type="match status" value="1"/>
</dbReference>
<dbReference type="Gene3D" id="3.30.420.40">
    <property type="match status" value="2"/>
</dbReference>
<dbReference type="Gene3D" id="3.90.640.10">
    <property type="entry name" value="Actin, Chain A, domain 4"/>
    <property type="match status" value="1"/>
</dbReference>
<dbReference type="Gene3D" id="2.60.34.10">
    <property type="entry name" value="Substrate Binding Domain Of DNAk, Chain A, domain 1"/>
    <property type="match status" value="1"/>
</dbReference>
<dbReference type="HAMAP" id="MF_00332">
    <property type="entry name" value="DnaK"/>
    <property type="match status" value="1"/>
</dbReference>
<dbReference type="InterPro" id="IPR043129">
    <property type="entry name" value="ATPase_NBD"/>
</dbReference>
<dbReference type="InterPro" id="IPR012725">
    <property type="entry name" value="Chaperone_DnaK"/>
</dbReference>
<dbReference type="InterPro" id="IPR018181">
    <property type="entry name" value="Heat_shock_70_CS"/>
</dbReference>
<dbReference type="InterPro" id="IPR029048">
    <property type="entry name" value="HSP70_C_sf"/>
</dbReference>
<dbReference type="InterPro" id="IPR029047">
    <property type="entry name" value="HSP70_peptide-bd_sf"/>
</dbReference>
<dbReference type="InterPro" id="IPR013126">
    <property type="entry name" value="Hsp_70_fam"/>
</dbReference>
<dbReference type="NCBIfam" id="NF001413">
    <property type="entry name" value="PRK00290.1"/>
    <property type="match status" value="1"/>
</dbReference>
<dbReference type="NCBIfam" id="NF003520">
    <property type="entry name" value="PRK05183.1"/>
    <property type="match status" value="1"/>
</dbReference>
<dbReference type="NCBIfam" id="TIGR02350">
    <property type="entry name" value="prok_dnaK"/>
    <property type="match status" value="1"/>
</dbReference>
<dbReference type="PANTHER" id="PTHR19375">
    <property type="entry name" value="HEAT SHOCK PROTEIN 70KDA"/>
    <property type="match status" value="1"/>
</dbReference>
<dbReference type="Pfam" id="PF00012">
    <property type="entry name" value="HSP70"/>
    <property type="match status" value="1"/>
</dbReference>
<dbReference type="PRINTS" id="PR00301">
    <property type="entry name" value="HEATSHOCK70"/>
</dbReference>
<dbReference type="SUPFAM" id="SSF53067">
    <property type="entry name" value="Actin-like ATPase domain"/>
    <property type="match status" value="2"/>
</dbReference>
<dbReference type="SUPFAM" id="SSF100920">
    <property type="entry name" value="Heat shock protein 70kD (HSP70), peptide-binding domain"/>
    <property type="match status" value="1"/>
</dbReference>
<dbReference type="PROSITE" id="PS00297">
    <property type="entry name" value="HSP70_1"/>
    <property type="match status" value="1"/>
</dbReference>
<dbReference type="PROSITE" id="PS00329">
    <property type="entry name" value="HSP70_2"/>
    <property type="match status" value="1"/>
</dbReference>
<dbReference type="PROSITE" id="PS01036">
    <property type="entry name" value="HSP70_3"/>
    <property type="match status" value="1"/>
</dbReference>
<organism>
    <name type="scientific">Xanthomonas axonopodis pv. citri (strain 306)</name>
    <dbReference type="NCBI Taxonomy" id="190486"/>
    <lineage>
        <taxon>Bacteria</taxon>
        <taxon>Pseudomonadati</taxon>
        <taxon>Pseudomonadota</taxon>
        <taxon>Gammaproteobacteria</taxon>
        <taxon>Lysobacterales</taxon>
        <taxon>Lysobacteraceae</taxon>
        <taxon>Xanthomonas</taxon>
    </lineage>
</organism>
<name>DNAK_XANAC</name>
<gene>
    <name evidence="1" type="primary">dnaK</name>
    <name type="ordered locus">XAC1522</name>
</gene>
<evidence type="ECO:0000255" key="1">
    <source>
        <dbReference type="HAMAP-Rule" id="MF_00332"/>
    </source>
</evidence>
<evidence type="ECO:0000256" key="2">
    <source>
        <dbReference type="SAM" id="MobiDB-lite"/>
    </source>
</evidence>
<protein>
    <recommendedName>
        <fullName evidence="1">Chaperone protein DnaK</fullName>
    </recommendedName>
    <alternativeName>
        <fullName evidence="1">HSP70</fullName>
    </alternativeName>
    <alternativeName>
        <fullName evidence="1">Heat shock 70 kDa protein</fullName>
    </alternativeName>
    <alternativeName>
        <fullName evidence="1">Heat shock protein 70</fullName>
    </alternativeName>
</protein>
<accession>Q8PMB0</accession>
<sequence>MGKIIGIDLGTTNSCVSIMDGGKARVIENSEGDRTTPSIVAYTKDGEVLVGASAKRQAVTNPKNTFYAVKRLIGRKFTDGEVQKDISHVPYGILAHDNGDAWVQTSDGKRMAPQEISARVLEKMKKTAEDFLGEKVTEAVITVPAYFNDSQRQATKDAGRIAGLDVKRIINEPTAAALAYGLDKNGGDRKIAVYDLGGGTFDVSIIEIAEVDGEKQFEVLATNGDTFLGGEDFDNRVIEYLVDEFNKDQGIDLRKDPLALQRLKDAAERAKIELSSSQQTEVNLPYVTADASGPKHLNIKLTRAKLEALVEDLVKKSIEPCRTALNDAGLRASDINEVILVGGQTRMPKVQQAVADFFGKEPRKDVNPDEAVAVGAAIQGGVLAGDVKDVLLLDVTPLSLGIETMGGVFTKIIEKNTTIPTKASQTFSTAEDNQSAVTVHVLQGEREQARFNKSLAKFDLSGIEPAPRGMPQVEVSFDIDANGILHVSAKDKKTNKEQKVEIKAGSGLSDEEIQRMVADAEANREEDKKFQELVQARNQADGLIHATRTAITEHGSKVGGDVIGKVEAALSDLETAMKGDDKAQIEARTKTLEEAGQSLYAAAAAAEQGGNADAASGNAQASKAADDVVDAEFTEVKDDKK</sequence>
<feature type="chain" id="PRO_0000078589" description="Chaperone protein DnaK">
    <location>
        <begin position="1"/>
        <end position="641"/>
    </location>
</feature>
<feature type="region of interest" description="Disordered" evidence="2">
    <location>
        <begin position="606"/>
        <end position="628"/>
    </location>
</feature>
<feature type="compositionally biased region" description="Low complexity" evidence="2">
    <location>
        <begin position="606"/>
        <end position="623"/>
    </location>
</feature>
<feature type="modified residue" description="Phosphothreonine; by autocatalysis" evidence="1">
    <location>
        <position position="200"/>
    </location>
</feature>
<reference key="1">
    <citation type="journal article" date="2002" name="Nature">
        <title>Comparison of the genomes of two Xanthomonas pathogens with differing host specificities.</title>
        <authorList>
            <person name="da Silva A.C.R."/>
            <person name="Ferro J.A."/>
            <person name="Reinach F.C."/>
            <person name="Farah C.S."/>
            <person name="Furlan L.R."/>
            <person name="Quaggio R.B."/>
            <person name="Monteiro-Vitorello C.B."/>
            <person name="Van Sluys M.A."/>
            <person name="Almeida N.F. Jr."/>
            <person name="Alves L.M.C."/>
            <person name="do Amaral A.M."/>
            <person name="Bertolini M.C."/>
            <person name="Camargo L.E.A."/>
            <person name="Camarotte G."/>
            <person name="Cannavan F."/>
            <person name="Cardozo J."/>
            <person name="Chambergo F."/>
            <person name="Ciapina L.P."/>
            <person name="Cicarelli R.M.B."/>
            <person name="Coutinho L.L."/>
            <person name="Cursino-Santos J.R."/>
            <person name="El-Dorry H."/>
            <person name="Faria J.B."/>
            <person name="Ferreira A.J.S."/>
            <person name="Ferreira R.C.C."/>
            <person name="Ferro M.I.T."/>
            <person name="Formighieri E.F."/>
            <person name="Franco M.C."/>
            <person name="Greggio C.C."/>
            <person name="Gruber A."/>
            <person name="Katsuyama A.M."/>
            <person name="Kishi L.T."/>
            <person name="Leite R.P."/>
            <person name="Lemos E.G.M."/>
            <person name="Lemos M.V.F."/>
            <person name="Locali E.C."/>
            <person name="Machado M.A."/>
            <person name="Madeira A.M.B.N."/>
            <person name="Martinez-Rossi N.M."/>
            <person name="Martins E.C."/>
            <person name="Meidanis J."/>
            <person name="Menck C.F.M."/>
            <person name="Miyaki C.Y."/>
            <person name="Moon D.H."/>
            <person name="Moreira L.M."/>
            <person name="Novo M.T.M."/>
            <person name="Okura V.K."/>
            <person name="Oliveira M.C."/>
            <person name="Oliveira V.R."/>
            <person name="Pereira H.A."/>
            <person name="Rossi A."/>
            <person name="Sena J.A.D."/>
            <person name="Silva C."/>
            <person name="de Souza R.F."/>
            <person name="Spinola L.A.F."/>
            <person name="Takita M.A."/>
            <person name="Tamura R.E."/>
            <person name="Teixeira E.C."/>
            <person name="Tezza R.I.D."/>
            <person name="Trindade dos Santos M."/>
            <person name="Truffi D."/>
            <person name="Tsai S.M."/>
            <person name="White F.F."/>
            <person name="Setubal J.C."/>
            <person name="Kitajima J.P."/>
        </authorList>
    </citation>
    <scope>NUCLEOTIDE SEQUENCE [LARGE SCALE GENOMIC DNA]</scope>
    <source>
        <strain>306</strain>
    </source>
</reference>
<keyword id="KW-0067">ATP-binding</keyword>
<keyword id="KW-0143">Chaperone</keyword>
<keyword id="KW-0547">Nucleotide-binding</keyword>
<keyword id="KW-0597">Phosphoprotein</keyword>
<keyword id="KW-0346">Stress response</keyword>
<comment type="function">
    <text evidence="1">Acts as a chaperone.</text>
</comment>
<comment type="induction">
    <text evidence="1">By stress conditions e.g. heat shock.</text>
</comment>
<comment type="similarity">
    <text evidence="1">Belongs to the heat shock protein 70 family.</text>
</comment>
<proteinExistence type="inferred from homology"/>